<gene>
    <name evidence="3" type="primary">CRE8</name>
    <name type="ORF">PITG_09160</name>
</gene>
<sequence length="168" mass="18385">MRLPSILVVAASTLFLHYGYTSASPGADAVLTGAVSLGFLQLVGADQSVIEQPRFLRDGKIAEGDNEERVNAQKEAAAKVLDQVFKTKSLSPLDKLEKTSNLAVIRHVAAMVDDKVDKIFAFADAVGMGRASMLKMLKGDKQFTDAERLKTVKRYVKFLIKKEQNNKA</sequence>
<proteinExistence type="evidence at transcript level"/>
<feature type="signal peptide" evidence="1">
    <location>
        <begin position="1"/>
        <end position="23"/>
    </location>
</feature>
<feature type="chain" id="PRO_5003012487" description="RxLR effector protein CRE8">
    <location>
        <begin position="24"/>
        <end position="168"/>
    </location>
</feature>
<feature type="short sequence motif" description="RxLR-dEER" evidence="5">
    <location>
        <begin position="54"/>
        <end position="69"/>
    </location>
</feature>
<keyword id="KW-1185">Reference proteome</keyword>
<keyword id="KW-0964">Secreted</keyword>
<keyword id="KW-0732">Signal</keyword>
<keyword id="KW-0843">Virulence</keyword>
<comment type="function">
    <text evidence="2">Effector that is involved in host plant infection. Contributes to virulence during the early infection stage, by inhibiting plant defense responses induced by both PAMP-triggered immunity (PTI) and effector-triggered immunity (ETI).</text>
</comment>
<comment type="subcellular location">
    <subcellularLocation>
        <location evidence="5">Secreted</location>
    </subcellularLocation>
    <subcellularLocation>
        <location evidence="5">Host cell</location>
    </subcellularLocation>
</comment>
<comment type="induction">
    <text evidence="2">Expression is induced during host plant infection.</text>
</comment>
<comment type="domain">
    <text evidence="5">The RxLR-dEER motif acts to carry the protein into the host cell cytoplasm through binding to cell surface phosphatidylinositol-3-phosphate.</text>
</comment>
<comment type="similarity">
    <text evidence="4">Belongs to the RxLR effector family.</text>
</comment>
<protein>
    <recommendedName>
        <fullName evidence="3">RxLR effector protein CRE8</fullName>
    </recommendedName>
    <alternativeName>
        <fullName evidence="3">Core RXLR effector 8</fullName>
    </alternativeName>
</protein>
<organism>
    <name type="scientific">Phytophthora infestans (strain T30-4)</name>
    <name type="common">Potato late blight agent</name>
    <dbReference type="NCBI Taxonomy" id="403677"/>
    <lineage>
        <taxon>Eukaryota</taxon>
        <taxon>Sar</taxon>
        <taxon>Stramenopiles</taxon>
        <taxon>Oomycota</taxon>
        <taxon>Peronosporales</taxon>
        <taxon>Peronosporaceae</taxon>
        <taxon>Phytophthora</taxon>
    </lineage>
</organism>
<reference key="1">
    <citation type="journal article" date="2009" name="Nature">
        <title>Genome sequence and analysis of the Irish potato famine pathogen Phytophthora infestans.</title>
        <authorList>
            <consortium name="The Broad Institute Genome Sequencing Platform"/>
            <person name="Haas B.J."/>
            <person name="Kamoun S."/>
            <person name="Zody M.C."/>
            <person name="Jiang R.H."/>
            <person name="Handsaker R.E."/>
            <person name="Cano L.M."/>
            <person name="Grabherr M."/>
            <person name="Kodira C.D."/>
            <person name="Raffaele S."/>
            <person name="Torto-Alalibo T."/>
            <person name="Bozkurt T.O."/>
            <person name="Ah-Fong A.M."/>
            <person name="Alvarado L."/>
            <person name="Anderson V.L."/>
            <person name="Armstrong M.R."/>
            <person name="Avrova A."/>
            <person name="Baxter L."/>
            <person name="Beynon J."/>
            <person name="Boevink P.C."/>
            <person name="Bollmann S.R."/>
            <person name="Bos J.I."/>
            <person name="Bulone V."/>
            <person name="Cai G."/>
            <person name="Cakir C."/>
            <person name="Carrington J.C."/>
            <person name="Chawner M."/>
            <person name="Conti L."/>
            <person name="Costanzo S."/>
            <person name="Ewan R."/>
            <person name="Fahlgren N."/>
            <person name="Fischbach M.A."/>
            <person name="Fugelstad J."/>
            <person name="Gilroy E.M."/>
            <person name="Gnerre S."/>
            <person name="Green P.J."/>
            <person name="Grenville-Briggs L.J."/>
            <person name="Griffith J."/>
            <person name="Grunwald N.J."/>
            <person name="Horn K."/>
            <person name="Horner N.R."/>
            <person name="Hu C.H."/>
            <person name="Huitema E."/>
            <person name="Jeong D.H."/>
            <person name="Jones A.M."/>
            <person name="Jones J.D."/>
            <person name="Jones R.W."/>
            <person name="Karlsson E.K."/>
            <person name="Kunjeti S.G."/>
            <person name="Lamour K."/>
            <person name="Liu Z."/>
            <person name="Ma L."/>
            <person name="Maclean D."/>
            <person name="Chibucos M.C."/>
            <person name="McDonald H."/>
            <person name="McWalters J."/>
            <person name="Meijer H.J."/>
            <person name="Morgan W."/>
            <person name="Morris P.F."/>
            <person name="Munro C.A."/>
            <person name="O'Neill K."/>
            <person name="Ospina-Giraldo M."/>
            <person name="Pinzon A."/>
            <person name="Pritchard L."/>
            <person name="Ramsahoye B."/>
            <person name="Ren Q."/>
            <person name="Restrepo S."/>
            <person name="Roy S."/>
            <person name="Sadanandom A."/>
            <person name="Savidor A."/>
            <person name="Schornack S."/>
            <person name="Schwartz D.C."/>
            <person name="Schumann U.D."/>
            <person name="Schwessinger B."/>
            <person name="Seyer L."/>
            <person name="Sharpe T."/>
            <person name="Silvar C."/>
            <person name="Song J."/>
            <person name="Studholme D.J."/>
            <person name="Sykes S."/>
            <person name="Thines M."/>
            <person name="van de Vondervoort P.J."/>
            <person name="Phuntumart V."/>
            <person name="Wawra S."/>
            <person name="Weide R."/>
            <person name="Win J."/>
            <person name="Young C."/>
            <person name="Zhou S."/>
            <person name="Fry W."/>
            <person name="Meyers B.C."/>
            <person name="van West P."/>
            <person name="Ristaino J."/>
            <person name="Govers F."/>
            <person name="Birch P.R."/>
            <person name="Whisson S.C."/>
            <person name="Judelson H.S."/>
            <person name="Nusbaum C."/>
        </authorList>
    </citation>
    <scope>NUCLEOTIDE SEQUENCE [LARGE SCALE GENOMIC DNA]</scope>
    <source>
        <strain>T30-4</strain>
    </source>
</reference>
<reference key="2">
    <citation type="journal article" date="2017" name="Front. Plant Sci.">
        <title>Conserved RXLR effector genes of Phytophthora infestans expressed at the early stage of potato infection are suppressive to host defense.</title>
        <authorList>
            <person name="Yin J."/>
            <person name="Gu B."/>
            <person name="Huang G."/>
            <person name="Tian Y."/>
            <person name="Quan J."/>
            <person name="Lindqvist-Kreuze H."/>
            <person name="Shan W."/>
        </authorList>
    </citation>
    <scope>INDUCTION</scope>
    <scope>DOMAIN</scope>
    <scope>FUNCTION</scope>
</reference>
<accession>D0NBU6</accession>
<evidence type="ECO:0000255" key="1"/>
<evidence type="ECO:0000269" key="2">
    <source>
    </source>
</evidence>
<evidence type="ECO:0000303" key="3">
    <source>
    </source>
</evidence>
<evidence type="ECO:0000305" key="4"/>
<evidence type="ECO:0000305" key="5">
    <source>
    </source>
</evidence>
<name>CRE8_PHYIT</name>
<dbReference type="EMBL" id="DS028131">
    <property type="protein sequence ID" value="EEY55251.1"/>
    <property type="molecule type" value="Genomic_DNA"/>
</dbReference>
<dbReference type="RefSeq" id="XP_002903475.1">
    <property type="nucleotide sequence ID" value="XM_002903429.1"/>
</dbReference>
<dbReference type="SMR" id="D0NBU6"/>
<dbReference type="STRING" id="403677.D0NBU6"/>
<dbReference type="EnsemblProtists" id="PITG_09160T0">
    <property type="protein sequence ID" value="PITG_09160T0"/>
    <property type="gene ID" value="PITG_09160"/>
</dbReference>
<dbReference type="GeneID" id="9470502"/>
<dbReference type="KEGG" id="pif:PITG_09160"/>
<dbReference type="VEuPathDB" id="FungiDB:PITG_09160"/>
<dbReference type="HOGENOM" id="CLU_1605966_0_0_1"/>
<dbReference type="InParanoid" id="D0NBU6"/>
<dbReference type="Proteomes" id="UP000006643">
    <property type="component" value="Partially assembled WGS sequence"/>
</dbReference>
<dbReference type="GO" id="GO:0005576">
    <property type="term" value="C:extracellular region"/>
    <property type="evidence" value="ECO:0007669"/>
    <property type="project" value="UniProtKB-SubCell"/>
</dbReference>
<dbReference type="GO" id="GO:0043657">
    <property type="term" value="C:host cell"/>
    <property type="evidence" value="ECO:0007669"/>
    <property type="project" value="UniProtKB-SubCell"/>
</dbReference>